<reference key="1">
    <citation type="journal article" date="1999" name="Hum. Mol. Genet.">
        <title>Identification and characterization of three novel missense mutations in mevalonate kinase cDNA causing mevalonic aciduria, a disorder of isoprene biosynthesis.</title>
        <authorList>
            <person name="Houten S.M."/>
            <person name="Romeijn G.J."/>
            <person name="Koster J."/>
            <person name="Gray R.G.F."/>
            <person name="Darbyshire P."/>
            <person name="Smit G.P.A."/>
            <person name="de Klerk J.B.C."/>
            <person name="Duran R."/>
            <person name="Gibson K.M."/>
            <person name="Wanders R.J.A."/>
            <person name="Waterham H.R."/>
        </authorList>
    </citation>
    <scope>NUCLEOTIDE SEQUENCE [MRNA]</scope>
</reference>
<reference key="2">
    <citation type="journal article" date="2004" name="Genome Res.">
        <title>The status, quality, and expansion of the NIH full-length cDNA project: the Mammalian Gene Collection (MGC).</title>
        <authorList>
            <consortium name="The MGC Project Team"/>
        </authorList>
    </citation>
    <scope>NUCLEOTIDE SEQUENCE [LARGE SCALE MRNA]</scope>
    <source>
        <strain>FVB/N</strain>
        <tissue>Mammary gland</tissue>
    </source>
</reference>
<reference key="3">
    <citation type="journal article" date="2010" name="Cell">
        <title>A tissue-specific atlas of mouse protein phosphorylation and expression.</title>
        <authorList>
            <person name="Huttlin E.L."/>
            <person name="Jedrychowski M.P."/>
            <person name="Elias J.E."/>
            <person name="Goswami T."/>
            <person name="Rad R."/>
            <person name="Beausoleil S.A."/>
            <person name="Villen J."/>
            <person name="Haas W."/>
            <person name="Sowa M.E."/>
            <person name="Gygi S.P."/>
        </authorList>
    </citation>
    <scope>IDENTIFICATION BY MASS SPECTROMETRY [LARGE SCALE ANALYSIS]</scope>
    <source>
        <tissue>Brain</tissue>
        <tissue>Liver</tissue>
        <tissue>Lung</tissue>
        <tissue>Pancreas</tissue>
        <tissue>Spleen</tissue>
        <tissue>Testis</tissue>
    </source>
</reference>
<comment type="function">
    <text evidence="2">Catalyzes the phosphorylation of mevalonate to mevalonate 5-phosphate, a key step in isoprenoid and cholesterol biosynthesis.</text>
</comment>
<comment type="catalytic activity">
    <reaction evidence="2">
        <text>(R)-mevalonate + ATP = (R)-5-phosphomevalonate + ADP + H(+)</text>
        <dbReference type="Rhea" id="RHEA:17065"/>
        <dbReference type="ChEBI" id="CHEBI:15378"/>
        <dbReference type="ChEBI" id="CHEBI:30616"/>
        <dbReference type="ChEBI" id="CHEBI:36464"/>
        <dbReference type="ChEBI" id="CHEBI:58146"/>
        <dbReference type="ChEBI" id="CHEBI:456216"/>
        <dbReference type="EC" id="2.7.1.36"/>
    </reaction>
</comment>
<comment type="cofactor">
    <cofactor evidence="1">
        <name>Mg(2+)</name>
        <dbReference type="ChEBI" id="CHEBI:18420"/>
    </cofactor>
</comment>
<comment type="activity regulation">
    <text evidence="2">Farnesyl pyrophosphate and geranyl pyrophosphate inhibit mevalonate kinase activity by binding competitively at the ATP-binding sites.</text>
</comment>
<comment type="pathway">
    <text>Isoprenoid biosynthesis; isopentenyl diphosphate biosynthesis via mevalonate pathway; isopentenyl diphosphate from (R)-mevalonate: step 1/3.</text>
</comment>
<comment type="subunit">
    <text evidence="2">Homodimer.</text>
</comment>
<comment type="subcellular location">
    <subcellularLocation>
        <location evidence="1">Cytoplasm</location>
    </subcellularLocation>
    <subcellularLocation>
        <location evidence="1">Peroxisome</location>
    </subcellularLocation>
</comment>
<comment type="similarity">
    <text evidence="3">Belongs to the GHMP kinase family. Mevalonate kinase subfamily.</text>
</comment>
<keyword id="KW-0067">ATP-binding</keyword>
<keyword id="KW-0152">Cholesterol biosynthesis</keyword>
<keyword id="KW-0153">Cholesterol metabolism</keyword>
<keyword id="KW-0963">Cytoplasm</keyword>
<keyword id="KW-0418">Kinase</keyword>
<keyword id="KW-0444">Lipid biosynthesis</keyword>
<keyword id="KW-0443">Lipid metabolism</keyword>
<keyword id="KW-0460">Magnesium</keyword>
<keyword id="KW-0479">Metal-binding</keyword>
<keyword id="KW-0547">Nucleotide-binding</keyword>
<keyword id="KW-0576">Peroxisome</keyword>
<keyword id="KW-1185">Reference proteome</keyword>
<keyword id="KW-0752">Steroid biosynthesis</keyword>
<keyword id="KW-0753">Steroid metabolism</keyword>
<keyword id="KW-0756">Sterol biosynthesis</keyword>
<keyword id="KW-1207">Sterol metabolism</keyword>
<keyword id="KW-0808">Transferase</keyword>
<sequence length="395" mass="41877">MLSEALLVSAPGKVILHGEHAVVHGKVALAAALNLRTFLLLRPQSNGKVSVNLPNIGIKQVWDVGMLQRLDTSFLEQGDVSVPTLEQLEKLKKMGDLPRDRAGNEGMALLAFLYLYLAICRKQRTLPSLDMVVWSELPPGAGLGSSAAYSVCLAAALLTACEEVSNPLKDGVSVSRWPEEDLKSINKWAFEGERVIHGNPSGVDNAVSTWGGALRFQQGTMSSLKSLPSLQILLTNTKVPRSTKALVAAVRSRLTKFPEIVAPLLTSIDAISLECERVLGEMVAAPVPEQYLVLEELIDMNQHHLNALGVGHNSLDQLCQVTAAHGLHSKLTGAGGGGCGITLLKPGLEQATVEAAKQALTSCGFDCWETSIGAPGVSTHSAAAVGDPVRQALGL</sequence>
<name>KIME_MOUSE</name>
<proteinExistence type="evidence at protein level"/>
<organism>
    <name type="scientific">Mus musculus</name>
    <name type="common">Mouse</name>
    <dbReference type="NCBI Taxonomy" id="10090"/>
    <lineage>
        <taxon>Eukaryota</taxon>
        <taxon>Metazoa</taxon>
        <taxon>Chordata</taxon>
        <taxon>Craniata</taxon>
        <taxon>Vertebrata</taxon>
        <taxon>Euteleostomi</taxon>
        <taxon>Mammalia</taxon>
        <taxon>Eutheria</taxon>
        <taxon>Euarchontoglires</taxon>
        <taxon>Glires</taxon>
        <taxon>Rodentia</taxon>
        <taxon>Myomorpha</taxon>
        <taxon>Muroidea</taxon>
        <taxon>Muridae</taxon>
        <taxon>Murinae</taxon>
        <taxon>Mus</taxon>
        <taxon>Mus</taxon>
    </lineage>
</organism>
<protein>
    <recommendedName>
        <fullName evidence="3">Mevalonate kinase</fullName>
        <shortName>MK</shortName>
        <ecNumber evidence="2">2.7.1.36</ecNumber>
    </recommendedName>
</protein>
<gene>
    <name evidence="4" type="primary">Mvk</name>
</gene>
<dbReference type="EC" id="2.7.1.36" evidence="2"/>
<dbReference type="EMBL" id="AF137598">
    <property type="protein sequence ID" value="AAF00700.1"/>
    <property type="molecule type" value="mRNA"/>
</dbReference>
<dbReference type="EMBL" id="BC005606">
    <property type="protein sequence ID" value="AAH05606.1"/>
    <property type="molecule type" value="mRNA"/>
</dbReference>
<dbReference type="CCDS" id="CCDS19566.1"/>
<dbReference type="RefSeq" id="NP_001415460.1">
    <property type="nucleotide sequence ID" value="NM_001428531.1"/>
</dbReference>
<dbReference type="RefSeq" id="NP_076045.1">
    <property type="nucleotide sequence ID" value="NM_023556.4"/>
</dbReference>
<dbReference type="RefSeq" id="XP_006530248.1">
    <property type="nucleotide sequence ID" value="XM_006530185.3"/>
</dbReference>
<dbReference type="SMR" id="Q9R008"/>
<dbReference type="BioGRID" id="201627">
    <property type="interactions" value="1"/>
</dbReference>
<dbReference type="FunCoup" id="Q9R008">
    <property type="interactions" value="2205"/>
</dbReference>
<dbReference type="STRING" id="10090.ENSMUSP00000107858"/>
<dbReference type="PhosphoSitePlus" id="Q9R008"/>
<dbReference type="jPOST" id="Q9R008"/>
<dbReference type="PaxDb" id="10090-ENSMUSP00000036971"/>
<dbReference type="PeptideAtlas" id="Q9R008"/>
<dbReference type="ProteomicsDB" id="263609"/>
<dbReference type="Pumba" id="Q9R008"/>
<dbReference type="Antibodypedia" id="2047">
    <property type="antibodies" value="390 antibodies from 32 providers"/>
</dbReference>
<dbReference type="DNASU" id="17855"/>
<dbReference type="Ensembl" id="ENSMUST00000043760.15">
    <property type="protein sequence ID" value="ENSMUSP00000036971.9"/>
    <property type="gene ID" value="ENSMUSG00000041939.15"/>
</dbReference>
<dbReference type="GeneID" id="17855"/>
<dbReference type="KEGG" id="mmu:17855"/>
<dbReference type="UCSC" id="uc008yzq.1">
    <property type="organism name" value="mouse"/>
</dbReference>
<dbReference type="AGR" id="MGI:107624"/>
<dbReference type="CTD" id="4598"/>
<dbReference type="MGI" id="MGI:107624">
    <property type="gene designation" value="Mvk"/>
</dbReference>
<dbReference type="VEuPathDB" id="HostDB:ENSMUSG00000041939"/>
<dbReference type="eggNOG" id="KOG1511">
    <property type="taxonomic scope" value="Eukaryota"/>
</dbReference>
<dbReference type="GeneTree" id="ENSGT00950000183187"/>
<dbReference type="HOGENOM" id="CLU_017814_0_1_1"/>
<dbReference type="InParanoid" id="Q9R008"/>
<dbReference type="OMA" id="LMDFNHG"/>
<dbReference type="OrthoDB" id="1652964at2759"/>
<dbReference type="PhylomeDB" id="Q9R008"/>
<dbReference type="TreeFam" id="TF313775"/>
<dbReference type="BRENDA" id="2.7.1.36">
    <property type="organism ID" value="3474"/>
</dbReference>
<dbReference type="Reactome" id="R-MMU-191273">
    <property type="pathway name" value="Cholesterol biosynthesis"/>
</dbReference>
<dbReference type="UniPathway" id="UPA00057">
    <property type="reaction ID" value="UER00098"/>
</dbReference>
<dbReference type="BioGRID-ORCS" id="17855">
    <property type="hits" value="28 hits in 82 CRISPR screens"/>
</dbReference>
<dbReference type="ChiTaRS" id="Mvk">
    <property type="organism name" value="mouse"/>
</dbReference>
<dbReference type="PRO" id="PR:Q9R008"/>
<dbReference type="Proteomes" id="UP000000589">
    <property type="component" value="Chromosome 5"/>
</dbReference>
<dbReference type="RNAct" id="Q9R008">
    <property type="molecule type" value="protein"/>
</dbReference>
<dbReference type="Bgee" id="ENSMUSG00000041939">
    <property type="expression patterns" value="Expressed in skin of snout and 264 other cell types or tissues"/>
</dbReference>
<dbReference type="ExpressionAtlas" id="Q9R008">
    <property type="expression patterns" value="baseline and differential"/>
</dbReference>
<dbReference type="GO" id="GO:0005829">
    <property type="term" value="C:cytosol"/>
    <property type="evidence" value="ECO:0007669"/>
    <property type="project" value="Ensembl"/>
</dbReference>
<dbReference type="GO" id="GO:0005777">
    <property type="term" value="C:peroxisome"/>
    <property type="evidence" value="ECO:0000250"/>
    <property type="project" value="UniProtKB"/>
</dbReference>
<dbReference type="GO" id="GO:0005524">
    <property type="term" value="F:ATP binding"/>
    <property type="evidence" value="ECO:0000250"/>
    <property type="project" value="UniProtKB"/>
</dbReference>
<dbReference type="GO" id="GO:0042802">
    <property type="term" value="F:identical protein binding"/>
    <property type="evidence" value="ECO:0000250"/>
    <property type="project" value="UniProtKB"/>
</dbReference>
<dbReference type="GO" id="GO:0000287">
    <property type="term" value="F:magnesium ion binding"/>
    <property type="evidence" value="ECO:0000250"/>
    <property type="project" value="UniProtKB"/>
</dbReference>
<dbReference type="GO" id="GO:0004496">
    <property type="term" value="F:mevalonate kinase activity"/>
    <property type="evidence" value="ECO:0000314"/>
    <property type="project" value="MGI"/>
</dbReference>
<dbReference type="GO" id="GO:0006695">
    <property type="term" value="P:cholesterol biosynthetic process"/>
    <property type="evidence" value="ECO:0007669"/>
    <property type="project" value="UniProtKB-KW"/>
</dbReference>
<dbReference type="GO" id="GO:0019287">
    <property type="term" value="P:isopentenyl diphosphate biosynthetic process, mevalonate pathway"/>
    <property type="evidence" value="ECO:0007669"/>
    <property type="project" value="UniProtKB-UniPathway"/>
</dbReference>
<dbReference type="GO" id="GO:0050728">
    <property type="term" value="P:negative regulation of inflammatory response"/>
    <property type="evidence" value="ECO:0007669"/>
    <property type="project" value="Ensembl"/>
</dbReference>
<dbReference type="FunFam" id="3.30.230.10:FF:000119">
    <property type="entry name" value="Mevalonate kinase"/>
    <property type="match status" value="1"/>
</dbReference>
<dbReference type="FunFam" id="3.30.70.890:FF:000003">
    <property type="entry name" value="Mevalonate kinase"/>
    <property type="match status" value="1"/>
</dbReference>
<dbReference type="Gene3D" id="3.30.230.10">
    <property type="match status" value="1"/>
</dbReference>
<dbReference type="Gene3D" id="3.30.70.890">
    <property type="entry name" value="GHMP kinase, C-terminal domain"/>
    <property type="match status" value="1"/>
</dbReference>
<dbReference type="InterPro" id="IPR013750">
    <property type="entry name" value="GHMP_kinase_C_dom"/>
</dbReference>
<dbReference type="InterPro" id="IPR036554">
    <property type="entry name" value="GHMP_kinase_C_sf"/>
</dbReference>
<dbReference type="InterPro" id="IPR006204">
    <property type="entry name" value="GHMP_kinase_N_dom"/>
</dbReference>
<dbReference type="InterPro" id="IPR006203">
    <property type="entry name" value="GHMP_knse_ATP-bd_CS"/>
</dbReference>
<dbReference type="InterPro" id="IPR006205">
    <property type="entry name" value="Mev_gal_kin"/>
</dbReference>
<dbReference type="InterPro" id="IPR020568">
    <property type="entry name" value="Ribosomal_Su5_D2-typ_SF"/>
</dbReference>
<dbReference type="InterPro" id="IPR014721">
    <property type="entry name" value="Ribsml_uS5_D2-typ_fold_subgr"/>
</dbReference>
<dbReference type="NCBIfam" id="TIGR00549">
    <property type="entry name" value="mevalon_kin"/>
    <property type="match status" value="1"/>
</dbReference>
<dbReference type="PANTHER" id="PTHR43290">
    <property type="entry name" value="MEVALONATE KINASE"/>
    <property type="match status" value="1"/>
</dbReference>
<dbReference type="PANTHER" id="PTHR43290:SF2">
    <property type="entry name" value="MEVALONATE KINASE"/>
    <property type="match status" value="1"/>
</dbReference>
<dbReference type="Pfam" id="PF08544">
    <property type="entry name" value="GHMP_kinases_C"/>
    <property type="match status" value="1"/>
</dbReference>
<dbReference type="Pfam" id="PF00288">
    <property type="entry name" value="GHMP_kinases_N"/>
    <property type="match status" value="1"/>
</dbReference>
<dbReference type="PRINTS" id="PR00959">
    <property type="entry name" value="MEVGALKINASE"/>
</dbReference>
<dbReference type="SUPFAM" id="SSF55060">
    <property type="entry name" value="GHMP Kinase, C-terminal domain"/>
    <property type="match status" value="1"/>
</dbReference>
<dbReference type="SUPFAM" id="SSF54211">
    <property type="entry name" value="Ribosomal protein S5 domain 2-like"/>
    <property type="match status" value="1"/>
</dbReference>
<dbReference type="PROSITE" id="PS00627">
    <property type="entry name" value="GHMP_KINASES_ATP"/>
    <property type="match status" value="1"/>
</dbReference>
<evidence type="ECO:0000250" key="1">
    <source>
        <dbReference type="UniProtKB" id="P17256"/>
    </source>
</evidence>
<evidence type="ECO:0000250" key="2">
    <source>
        <dbReference type="UniProtKB" id="Q03426"/>
    </source>
</evidence>
<evidence type="ECO:0000305" key="3"/>
<evidence type="ECO:0000312" key="4">
    <source>
        <dbReference type="MGI" id="MGI:107624"/>
    </source>
</evidence>
<accession>Q9R008</accession>
<feature type="chain" id="PRO_0000156658" description="Mevalonate kinase">
    <location>
        <begin position="1"/>
        <end position="395"/>
    </location>
</feature>
<feature type="active site" description="Proton donor" evidence="2">
    <location>
        <position position="146"/>
    </location>
</feature>
<feature type="active site" description="Proton acceptor" evidence="2">
    <location>
        <position position="204"/>
    </location>
</feature>
<feature type="binding site" evidence="1">
    <location>
        <position position="13"/>
    </location>
    <ligand>
        <name>ATP</name>
        <dbReference type="ChEBI" id="CHEBI:30616"/>
    </ligand>
</feature>
<feature type="binding site" evidence="1">
    <location>
        <position position="55"/>
    </location>
    <ligand>
        <name>ATP</name>
        <dbReference type="ChEBI" id="CHEBI:30616"/>
    </ligand>
</feature>
<feature type="binding site" evidence="1">
    <location>
        <position position="104"/>
    </location>
    <ligand>
        <name>ATP</name>
        <dbReference type="ChEBI" id="CHEBI:30616"/>
    </ligand>
</feature>
<feature type="binding site" evidence="1">
    <location>
        <position position="135"/>
    </location>
    <ligand>
        <name>ATP</name>
        <dbReference type="ChEBI" id="CHEBI:30616"/>
    </ligand>
</feature>
<feature type="binding site" evidence="1">
    <location>
        <begin position="140"/>
        <end position="146"/>
    </location>
    <ligand>
        <name>ATP</name>
        <dbReference type="ChEBI" id="CHEBI:30616"/>
    </ligand>
</feature>
<feature type="binding site" evidence="1">
    <location>
        <position position="146"/>
    </location>
    <ligand>
        <name>Mg(2+)</name>
        <dbReference type="ChEBI" id="CHEBI:18420"/>
    </ligand>
</feature>
<feature type="binding site" evidence="1">
    <location>
        <position position="193"/>
    </location>
    <ligand>
        <name>Mg(2+)</name>
        <dbReference type="ChEBI" id="CHEBI:18420"/>
    </ligand>
</feature>